<gene>
    <name evidence="1" type="primary">glpK</name>
    <name type="ordered locus">Xaut_2809</name>
</gene>
<evidence type="ECO:0000255" key="1">
    <source>
        <dbReference type="HAMAP-Rule" id="MF_00186"/>
    </source>
</evidence>
<organism>
    <name type="scientific">Xanthobacter autotrophicus (strain ATCC BAA-1158 / Py2)</name>
    <dbReference type="NCBI Taxonomy" id="78245"/>
    <lineage>
        <taxon>Bacteria</taxon>
        <taxon>Pseudomonadati</taxon>
        <taxon>Pseudomonadota</taxon>
        <taxon>Alphaproteobacteria</taxon>
        <taxon>Hyphomicrobiales</taxon>
        <taxon>Xanthobacteraceae</taxon>
        <taxon>Xanthobacter</taxon>
    </lineage>
</organism>
<comment type="function">
    <text evidence="1">Key enzyme in the regulation of glycerol uptake and metabolism. Catalyzes the phosphorylation of glycerol to yield sn-glycerol 3-phosphate.</text>
</comment>
<comment type="catalytic activity">
    <reaction evidence="1">
        <text>glycerol + ATP = sn-glycerol 3-phosphate + ADP + H(+)</text>
        <dbReference type="Rhea" id="RHEA:21644"/>
        <dbReference type="ChEBI" id="CHEBI:15378"/>
        <dbReference type="ChEBI" id="CHEBI:17754"/>
        <dbReference type="ChEBI" id="CHEBI:30616"/>
        <dbReference type="ChEBI" id="CHEBI:57597"/>
        <dbReference type="ChEBI" id="CHEBI:456216"/>
        <dbReference type="EC" id="2.7.1.30"/>
    </reaction>
</comment>
<comment type="activity regulation">
    <text evidence="1">Inhibited by fructose 1,6-bisphosphate (FBP).</text>
</comment>
<comment type="pathway">
    <text evidence="1">Polyol metabolism; glycerol degradation via glycerol kinase pathway; sn-glycerol 3-phosphate from glycerol: step 1/1.</text>
</comment>
<comment type="similarity">
    <text evidence="1">Belongs to the FGGY kinase family.</text>
</comment>
<feature type="chain" id="PRO_1000098774" description="Glycerol kinase">
    <location>
        <begin position="1"/>
        <end position="497"/>
    </location>
</feature>
<feature type="binding site" evidence="1">
    <location>
        <position position="12"/>
    </location>
    <ligand>
        <name>ADP</name>
        <dbReference type="ChEBI" id="CHEBI:456216"/>
    </ligand>
</feature>
<feature type="binding site" evidence="1">
    <location>
        <position position="12"/>
    </location>
    <ligand>
        <name>ATP</name>
        <dbReference type="ChEBI" id="CHEBI:30616"/>
    </ligand>
</feature>
<feature type="binding site" evidence="1">
    <location>
        <position position="12"/>
    </location>
    <ligand>
        <name>sn-glycerol 3-phosphate</name>
        <dbReference type="ChEBI" id="CHEBI:57597"/>
    </ligand>
</feature>
<feature type="binding site" evidence="1">
    <location>
        <position position="13"/>
    </location>
    <ligand>
        <name>ATP</name>
        <dbReference type="ChEBI" id="CHEBI:30616"/>
    </ligand>
</feature>
<feature type="binding site" evidence="1">
    <location>
        <position position="14"/>
    </location>
    <ligand>
        <name>ATP</name>
        <dbReference type="ChEBI" id="CHEBI:30616"/>
    </ligand>
</feature>
<feature type="binding site" evidence="1">
    <location>
        <position position="16"/>
    </location>
    <ligand>
        <name>ADP</name>
        <dbReference type="ChEBI" id="CHEBI:456216"/>
    </ligand>
</feature>
<feature type="binding site" evidence="1">
    <location>
        <position position="82"/>
    </location>
    <ligand>
        <name>glycerol</name>
        <dbReference type="ChEBI" id="CHEBI:17754"/>
    </ligand>
</feature>
<feature type="binding site" evidence="1">
    <location>
        <position position="82"/>
    </location>
    <ligand>
        <name>sn-glycerol 3-phosphate</name>
        <dbReference type="ChEBI" id="CHEBI:57597"/>
    </ligand>
</feature>
<feature type="binding site" evidence="1">
    <location>
        <position position="83"/>
    </location>
    <ligand>
        <name>glycerol</name>
        <dbReference type="ChEBI" id="CHEBI:17754"/>
    </ligand>
</feature>
<feature type="binding site" evidence="1">
    <location>
        <position position="83"/>
    </location>
    <ligand>
        <name>sn-glycerol 3-phosphate</name>
        <dbReference type="ChEBI" id="CHEBI:57597"/>
    </ligand>
</feature>
<feature type="binding site" evidence="1">
    <location>
        <position position="134"/>
    </location>
    <ligand>
        <name>glycerol</name>
        <dbReference type="ChEBI" id="CHEBI:17754"/>
    </ligand>
</feature>
<feature type="binding site" evidence="1">
    <location>
        <position position="134"/>
    </location>
    <ligand>
        <name>sn-glycerol 3-phosphate</name>
        <dbReference type="ChEBI" id="CHEBI:57597"/>
    </ligand>
</feature>
<feature type="binding site" evidence="1">
    <location>
        <position position="243"/>
    </location>
    <ligand>
        <name>glycerol</name>
        <dbReference type="ChEBI" id="CHEBI:17754"/>
    </ligand>
</feature>
<feature type="binding site" evidence="1">
    <location>
        <position position="243"/>
    </location>
    <ligand>
        <name>sn-glycerol 3-phosphate</name>
        <dbReference type="ChEBI" id="CHEBI:57597"/>
    </ligand>
</feature>
<feature type="binding site" evidence="1">
    <location>
        <position position="244"/>
    </location>
    <ligand>
        <name>glycerol</name>
        <dbReference type="ChEBI" id="CHEBI:17754"/>
    </ligand>
</feature>
<feature type="binding site" evidence="1">
    <location>
        <position position="265"/>
    </location>
    <ligand>
        <name>ADP</name>
        <dbReference type="ChEBI" id="CHEBI:456216"/>
    </ligand>
</feature>
<feature type="binding site" evidence="1">
    <location>
        <position position="265"/>
    </location>
    <ligand>
        <name>ATP</name>
        <dbReference type="ChEBI" id="CHEBI:30616"/>
    </ligand>
</feature>
<feature type="binding site" evidence="1">
    <location>
        <position position="308"/>
    </location>
    <ligand>
        <name>ADP</name>
        <dbReference type="ChEBI" id="CHEBI:456216"/>
    </ligand>
</feature>
<feature type="binding site" evidence="1">
    <location>
        <position position="308"/>
    </location>
    <ligand>
        <name>ATP</name>
        <dbReference type="ChEBI" id="CHEBI:30616"/>
    </ligand>
</feature>
<feature type="binding site" evidence="1">
    <location>
        <position position="312"/>
    </location>
    <ligand>
        <name>ATP</name>
        <dbReference type="ChEBI" id="CHEBI:30616"/>
    </ligand>
</feature>
<feature type="binding site" evidence="1">
    <location>
        <position position="411"/>
    </location>
    <ligand>
        <name>ADP</name>
        <dbReference type="ChEBI" id="CHEBI:456216"/>
    </ligand>
</feature>
<feature type="binding site" evidence="1">
    <location>
        <position position="411"/>
    </location>
    <ligand>
        <name>ATP</name>
        <dbReference type="ChEBI" id="CHEBI:30616"/>
    </ligand>
</feature>
<protein>
    <recommendedName>
        <fullName evidence="1">Glycerol kinase</fullName>
        <ecNumber evidence="1">2.7.1.30</ecNumber>
    </recommendedName>
    <alternativeName>
        <fullName evidence="1">ATP:glycerol 3-phosphotransferase</fullName>
    </alternativeName>
    <alternativeName>
        <fullName evidence="1">Glycerokinase</fullName>
        <shortName evidence="1">GK</shortName>
    </alternativeName>
</protein>
<sequence>MAAYILAIDQGTTSSRALLVRRDGTIAALAQEELPQHFPASGEVEQEAEDIWNTVLSCCRVVLRQAGVGPSDIAAIGITNQRETTLVWERATGRAIHRAIVWQDRRTADTCARLEAEGHGALIRARTGLLIDPYFSATKIAHILEKVPGARARAEKGELAFGTVDSFLLFRLTGGRVHATDATNASRTMLFDIHKGAWDDDLLALFGVPRALLPEVRDCAAEFGATDPEMFGAPIPIRGMAGDQQAAMVGQACFQPGMVKSTYGTGCFALLNTGETPVASRHRLITTIAYQIEGRRTYALEGSIFVAGAAVQWLRDGLKMISHAAESDRLAAEADEGQDVILVPAFVGLGAPYWRPQVRGALFGLTRATGPAELARAALEAVCFQTCDLIDAMHADWPGQSGATVLRVDGGMSASDFTMQRLADLLGAPVDRPAETETTVLGAAYLAGLQCGFFPPPDIFAQGWRLERRFVPAMADEVRAMRLAAWRSAVECLIGRD</sequence>
<keyword id="KW-0067">ATP-binding</keyword>
<keyword id="KW-0319">Glycerol metabolism</keyword>
<keyword id="KW-0418">Kinase</keyword>
<keyword id="KW-0547">Nucleotide-binding</keyword>
<keyword id="KW-1185">Reference proteome</keyword>
<keyword id="KW-0808">Transferase</keyword>
<accession>A7IJ56</accession>
<dbReference type="EC" id="2.7.1.30" evidence="1"/>
<dbReference type="EMBL" id="CP000781">
    <property type="protein sequence ID" value="ABS68049.1"/>
    <property type="molecule type" value="Genomic_DNA"/>
</dbReference>
<dbReference type="SMR" id="A7IJ56"/>
<dbReference type="STRING" id="78245.Xaut_2809"/>
<dbReference type="KEGG" id="xau:Xaut_2809"/>
<dbReference type="eggNOG" id="COG0554">
    <property type="taxonomic scope" value="Bacteria"/>
</dbReference>
<dbReference type="HOGENOM" id="CLU_009281_2_3_5"/>
<dbReference type="OrthoDB" id="9805576at2"/>
<dbReference type="PhylomeDB" id="A7IJ56"/>
<dbReference type="UniPathway" id="UPA00618">
    <property type="reaction ID" value="UER00672"/>
</dbReference>
<dbReference type="Proteomes" id="UP000002417">
    <property type="component" value="Chromosome"/>
</dbReference>
<dbReference type="GO" id="GO:0005829">
    <property type="term" value="C:cytosol"/>
    <property type="evidence" value="ECO:0007669"/>
    <property type="project" value="TreeGrafter"/>
</dbReference>
<dbReference type="GO" id="GO:0005524">
    <property type="term" value="F:ATP binding"/>
    <property type="evidence" value="ECO:0007669"/>
    <property type="project" value="UniProtKB-UniRule"/>
</dbReference>
<dbReference type="GO" id="GO:0004370">
    <property type="term" value="F:glycerol kinase activity"/>
    <property type="evidence" value="ECO:0000250"/>
    <property type="project" value="UniProtKB"/>
</dbReference>
<dbReference type="GO" id="GO:0019563">
    <property type="term" value="P:glycerol catabolic process"/>
    <property type="evidence" value="ECO:0007669"/>
    <property type="project" value="UniProtKB-UniRule"/>
</dbReference>
<dbReference type="GO" id="GO:0006071">
    <property type="term" value="P:glycerol metabolic process"/>
    <property type="evidence" value="ECO:0000250"/>
    <property type="project" value="UniProtKB"/>
</dbReference>
<dbReference type="GO" id="GO:0006072">
    <property type="term" value="P:glycerol-3-phosphate metabolic process"/>
    <property type="evidence" value="ECO:0007669"/>
    <property type="project" value="InterPro"/>
</dbReference>
<dbReference type="CDD" id="cd07786">
    <property type="entry name" value="FGGY_EcGK_like"/>
    <property type="match status" value="1"/>
</dbReference>
<dbReference type="FunFam" id="3.30.420.40:FF:000007">
    <property type="entry name" value="Glycerol kinase"/>
    <property type="match status" value="1"/>
</dbReference>
<dbReference type="FunFam" id="3.30.420.40:FF:000008">
    <property type="entry name" value="Glycerol kinase"/>
    <property type="match status" value="1"/>
</dbReference>
<dbReference type="Gene3D" id="3.30.420.40">
    <property type="match status" value="2"/>
</dbReference>
<dbReference type="HAMAP" id="MF_00186">
    <property type="entry name" value="Glycerol_kin"/>
    <property type="match status" value="1"/>
</dbReference>
<dbReference type="InterPro" id="IPR043129">
    <property type="entry name" value="ATPase_NBD"/>
</dbReference>
<dbReference type="InterPro" id="IPR000577">
    <property type="entry name" value="Carb_kinase_FGGY"/>
</dbReference>
<dbReference type="InterPro" id="IPR018483">
    <property type="entry name" value="Carb_kinase_FGGY_CS"/>
</dbReference>
<dbReference type="InterPro" id="IPR018485">
    <property type="entry name" value="FGGY_C"/>
</dbReference>
<dbReference type="InterPro" id="IPR018484">
    <property type="entry name" value="FGGY_N"/>
</dbReference>
<dbReference type="InterPro" id="IPR005999">
    <property type="entry name" value="Glycerol_kin"/>
</dbReference>
<dbReference type="NCBIfam" id="TIGR01311">
    <property type="entry name" value="glycerol_kin"/>
    <property type="match status" value="1"/>
</dbReference>
<dbReference type="NCBIfam" id="NF000756">
    <property type="entry name" value="PRK00047.1"/>
    <property type="match status" value="1"/>
</dbReference>
<dbReference type="PANTHER" id="PTHR10196:SF78">
    <property type="entry name" value="GLYCEROL KINASE"/>
    <property type="match status" value="1"/>
</dbReference>
<dbReference type="PANTHER" id="PTHR10196">
    <property type="entry name" value="SUGAR KINASE"/>
    <property type="match status" value="1"/>
</dbReference>
<dbReference type="Pfam" id="PF02782">
    <property type="entry name" value="FGGY_C"/>
    <property type="match status" value="1"/>
</dbReference>
<dbReference type="Pfam" id="PF00370">
    <property type="entry name" value="FGGY_N"/>
    <property type="match status" value="1"/>
</dbReference>
<dbReference type="PIRSF" id="PIRSF000538">
    <property type="entry name" value="GlpK"/>
    <property type="match status" value="1"/>
</dbReference>
<dbReference type="SUPFAM" id="SSF53067">
    <property type="entry name" value="Actin-like ATPase domain"/>
    <property type="match status" value="2"/>
</dbReference>
<dbReference type="PROSITE" id="PS00445">
    <property type="entry name" value="FGGY_KINASES_2"/>
    <property type="match status" value="1"/>
</dbReference>
<name>GLPK_XANP2</name>
<proteinExistence type="inferred from homology"/>
<reference key="1">
    <citation type="submission" date="2007-07" db="EMBL/GenBank/DDBJ databases">
        <title>Complete sequence of chromosome of Xanthobacter autotrophicus Py2.</title>
        <authorList>
            <consortium name="US DOE Joint Genome Institute"/>
            <person name="Copeland A."/>
            <person name="Lucas S."/>
            <person name="Lapidus A."/>
            <person name="Barry K."/>
            <person name="Glavina del Rio T."/>
            <person name="Hammon N."/>
            <person name="Israni S."/>
            <person name="Dalin E."/>
            <person name="Tice H."/>
            <person name="Pitluck S."/>
            <person name="Sims D."/>
            <person name="Brettin T."/>
            <person name="Bruce D."/>
            <person name="Detter J.C."/>
            <person name="Han C."/>
            <person name="Tapia R."/>
            <person name="Brainard J."/>
            <person name="Schmutz J."/>
            <person name="Larimer F."/>
            <person name="Land M."/>
            <person name="Hauser L."/>
            <person name="Kyrpides N."/>
            <person name="Kim E."/>
            <person name="Ensigns S.A."/>
            <person name="Richardson P."/>
        </authorList>
    </citation>
    <scope>NUCLEOTIDE SEQUENCE [LARGE SCALE GENOMIC DNA]</scope>
    <source>
        <strain>ATCC BAA-1158 / Py2</strain>
    </source>
</reference>